<protein>
    <recommendedName>
        <fullName evidence="6">Coelomocyte uptake defective protein 15</fullName>
    </recommendedName>
</protein>
<dbReference type="EMBL" id="BX284602">
    <property type="protein sequence ID" value="CAA87781.2"/>
    <property type="molecule type" value="Genomic_DNA"/>
</dbReference>
<dbReference type="PIR" id="T22084">
    <property type="entry name" value="T22084"/>
</dbReference>
<dbReference type="RefSeq" id="NP_001379070.1">
    <property type="nucleotide sequence ID" value="NM_001393152.1"/>
</dbReference>
<dbReference type="RefSeq" id="NP_495993.2">
    <property type="nucleotide sequence ID" value="NM_063592.3"/>
</dbReference>
<dbReference type="SMR" id="Q09322"/>
<dbReference type="BioGRID" id="39807">
    <property type="interactions" value="1"/>
</dbReference>
<dbReference type="FunCoup" id="Q09322">
    <property type="interactions" value="1894"/>
</dbReference>
<dbReference type="STRING" id="6239.F42A8.3.1"/>
<dbReference type="GlyCosmos" id="Q09322">
    <property type="glycosylation" value="7 sites, No reported glycans"/>
</dbReference>
<dbReference type="iPTMnet" id="Q09322"/>
<dbReference type="PaxDb" id="6239-F42A8.3"/>
<dbReference type="PeptideAtlas" id="Q09322"/>
<dbReference type="EnsemblMetazoa" id="F42A8.3.1">
    <property type="protein sequence ID" value="F42A8.3.1"/>
    <property type="gene ID" value="WBGene00009627"/>
</dbReference>
<dbReference type="GeneID" id="174483"/>
<dbReference type="UCSC" id="F42A8.3">
    <property type="organism name" value="c. elegans"/>
</dbReference>
<dbReference type="AGR" id="WB:WBGene00009627"/>
<dbReference type="WormBase" id="F42A8.3">
    <property type="protein sequence ID" value="CE35875"/>
    <property type="gene ID" value="WBGene00009627"/>
    <property type="gene designation" value="cup-15"/>
</dbReference>
<dbReference type="eggNOG" id="KOG4617">
    <property type="taxonomic scope" value="Eukaryota"/>
</dbReference>
<dbReference type="GeneTree" id="ENSGT00390000012341"/>
<dbReference type="HOGENOM" id="CLU_858513_0_0_1"/>
<dbReference type="InParanoid" id="Q09322"/>
<dbReference type="OMA" id="LKCCQRE"/>
<dbReference type="OrthoDB" id="8021850at2759"/>
<dbReference type="PhylomeDB" id="Q09322"/>
<dbReference type="Reactome" id="R-CEL-2672351">
    <property type="pathway name" value="Stimuli-sensing channels"/>
</dbReference>
<dbReference type="PRO" id="PR:Q09322"/>
<dbReference type="Proteomes" id="UP000001940">
    <property type="component" value="Chromosome II"/>
</dbReference>
<dbReference type="Bgee" id="WBGene00009627">
    <property type="expression patterns" value="Expressed in germ line (C elegans) and 4 other cell types or tissues"/>
</dbReference>
<dbReference type="GO" id="GO:0005829">
    <property type="term" value="C:cytosol"/>
    <property type="evidence" value="ECO:0000318"/>
    <property type="project" value="GO_Central"/>
</dbReference>
<dbReference type="GO" id="GO:0016020">
    <property type="term" value="C:membrane"/>
    <property type="evidence" value="ECO:0007669"/>
    <property type="project" value="UniProtKB-SubCell"/>
</dbReference>
<dbReference type="GO" id="GO:0007040">
    <property type="term" value="P:lysosome organization"/>
    <property type="evidence" value="ECO:0000315"/>
    <property type="project" value="WormBase"/>
</dbReference>
<dbReference type="InterPro" id="IPR019172">
    <property type="entry name" value="Osteopetrosis-assoc_TM_1"/>
</dbReference>
<dbReference type="PANTHER" id="PTHR15644">
    <property type="entry name" value="OSTEOPETROSIS ASSOCIATED TRANSMEMBRANE PROTEIN 1"/>
    <property type="match status" value="1"/>
</dbReference>
<dbReference type="PANTHER" id="PTHR15644:SF2">
    <property type="entry name" value="OSTEOPETROSIS-ASSOCIATED TRANSMEMBRANE PROTEIN 1"/>
    <property type="match status" value="1"/>
</dbReference>
<dbReference type="Pfam" id="PF09777">
    <property type="entry name" value="OSTMP1"/>
    <property type="match status" value="1"/>
</dbReference>
<proteinExistence type="evidence at protein level"/>
<feature type="signal peptide" evidence="1">
    <location>
        <begin position="1"/>
        <end position="20"/>
    </location>
</feature>
<feature type="chain" id="PRO_0000014283" description="Coelomocyte uptake defective protein 15" evidence="5">
    <location>
        <begin position="21"/>
        <end position="322"/>
    </location>
</feature>
<feature type="transmembrane region" description="Helical" evidence="1">
    <location>
        <begin position="244"/>
        <end position="264"/>
    </location>
</feature>
<feature type="glycosylation site" description="N-linked (GlcNAc...) asparagine" evidence="1">
    <location>
        <position position="62"/>
    </location>
</feature>
<feature type="glycosylation site" description="N-linked (GlcNAc...) asparagine" evidence="2">
    <location>
        <position position="98"/>
    </location>
</feature>
<feature type="glycosylation site" description="N-linked (GlcNAc...) asparagine" evidence="2">
    <location>
        <position position="144"/>
    </location>
</feature>
<feature type="glycosylation site" description="N-linked (GlcNAc...) asparagine" evidence="1">
    <location>
        <position position="170"/>
    </location>
</feature>
<feature type="glycosylation site" description="N-linked (GlcNAc...) asparagine" evidence="1">
    <location>
        <position position="180"/>
    </location>
</feature>
<feature type="glycosylation site" description="N-linked (GlcNAc...) asparagine" evidence="1">
    <location>
        <position position="183"/>
    </location>
</feature>
<feature type="glycosylation site" description="N-linked (GlcNAc...) asparagine" evidence="1">
    <location>
        <position position="222"/>
    </location>
</feature>
<feature type="mutagenesis site" description="In cd33; results in viable animals, but hermaphrodites have larger early endosomes in coelomocytes within the body wall cavity. Coelomocytes are able to undergo endocytic uptake, but defects are most likely due to a delay in the transport of substances from the endosomal to lysosomal compartments and maybe irregular lysosomal degradation in coelomocytes." evidence="3">
    <location>
        <begin position="233"/>
        <end position="322"/>
    </location>
</feature>
<accession>Q09322</accession>
<keyword id="KW-0325">Glycoprotein</keyword>
<keyword id="KW-0472">Membrane</keyword>
<keyword id="KW-1185">Reference proteome</keyword>
<keyword id="KW-0732">Signal</keyword>
<keyword id="KW-0812">Transmembrane</keyword>
<keyword id="KW-1133">Transmembrane helix</keyword>
<sequence>MVNSLSRILFCSLLIFSVISLREERLETAPITDDPWDLDGPCQKYVEKLAVVQSEMVACATNWSIPPVVCTKCFQNYINFKQFEYETKNLNNVYSLDNRTCSQVIYDNYLLSYSTDISKALTSEIWEKSRCDSCITIKWNFPQNKSEVSFSERTMQFQNRMYEWRNCVVNYTSGGVLDDNLTNGSKICNLCKTTFDELFGYYWKIYTTPDVDFCVDVETTMNDTIHLWDDVWKCAEKQDRNRDLFGIMITFGTLLLLTALFYAASYIQGGGETRRLIQYARLSDPHGQRSRLLSSGMSDADLVSRVSPGSSVLYNVPIHQTR</sequence>
<reference key="1">
    <citation type="journal article" date="1998" name="Science">
        <title>Genome sequence of the nematode C. elegans: a platform for investigating biology.</title>
        <authorList>
            <consortium name="The C. elegans sequencing consortium"/>
        </authorList>
    </citation>
    <scope>NUCLEOTIDE SEQUENCE [LARGE SCALE GENOMIC DNA]</scope>
    <source>
        <strain>Bristol N2</strain>
    </source>
</reference>
<reference key="2">
    <citation type="journal article" date="2007" name="Mol. Cell. Proteomics">
        <title>Proteomics reveals N-linked glycoprotein diversity in Caenorhabditis elegans and suggests an atypical translocation mechanism for integral membrane proteins.</title>
        <authorList>
            <person name="Kaji H."/>
            <person name="Kamiie J."/>
            <person name="Kawakami H."/>
            <person name="Kido K."/>
            <person name="Yamauchi Y."/>
            <person name="Shinkawa T."/>
            <person name="Taoka M."/>
            <person name="Takahashi N."/>
            <person name="Isobe T."/>
        </authorList>
    </citation>
    <scope>GLYCOSYLATION [LARGE SCALE ANALYSIS] AT ASN-98 AND ASN-144</scope>
    <scope>IDENTIFICATION BY MASS SPECTROMETRY</scope>
    <source>
        <strain>Bristol N2</strain>
    </source>
</reference>
<reference key="3">
    <citation type="journal article" date="2017" name="G3 (Bethesda)">
        <title>Regulators of Lysosome Function and Dynamics in Caenorhabditis elegans.</title>
        <authorList>
            <person name="Gee K."/>
            <person name="Zamora D."/>
            <person name="Horm T."/>
            <person name="George L."/>
            <person name="Upchurch C."/>
            <person name="Randall J."/>
            <person name="Weaver C."/>
            <person name="Sanford C."/>
            <person name="Miller A."/>
            <person name="Hernandez S."/>
            <person name="Dang H."/>
            <person name="Fares H."/>
        </authorList>
    </citation>
    <scope>FUNCTION</scope>
    <scope>DISRUPTION PHENOTYPE</scope>
    <scope>MUTAGENESIS OF 233-TRP--ARG-322</scope>
</reference>
<name>CUP15_CAEEL</name>
<comment type="function">
    <text evidence="3">Modulates the transport of substances from the endosomal to lysosomal compartments. Plays a role in lysosome formation and function in coelomocytes.</text>
</comment>
<comment type="subcellular location">
    <subcellularLocation>
        <location evidence="5">Membrane</location>
        <topology evidence="5">Single-pass membrane protein</topology>
    </subcellularLocation>
</comment>
<comment type="disruption phenotype">
    <text evidence="3">RNAi-mediated knockdown results in the accumulation of substances in coelomocytes within the body wall cavity, which may be indicative of lysosomal defects.</text>
</comment>
<comment type="similarity">
    <text evidence="5">Belongs to the OSTM1 family.</text>
</comment>
<gene>
    <name evidence="4 6" type="primary">cup-15</name>
    <name evidence="6" type="ORF">F42A8.3</name>
</gene>
<organism>
    <name type="scientific">Caenorhabditis elegans</name>
    <dbReference type="NCBI Taxonomy" id="6239"/>
    <lineage>
        <taxon>Eukaryota</taxon>
        <taxon>Metazoa</taxon>
        <taxon>Ecdysozoa</taxon>
        <taxon>Nematoda</taxon>
        <taxon>Chromadorea</taxon>
        <taxon>Rhabditida</taxon>
        <taxon>Rhabditina</taxon>
        <taxon>Rhabditomorpha</taxon>
        <taxon>Rhabditoidea</taxon>
        <taxon>Rhabditidae</taxon>
        <taxon>Peloderinae</taxon>
        <taxon>Caenorhabditis</taxon>
    </lineage>
</organism>
<evidence type="ECO:0000255" key="1"/>
<evidence type="ECO:0000269" key="2">
    <source>
    </source>
</evidence>
<evidence type="ECO:0000269" key="3">
    <source>
    </source>
</evidence>
<evidence type="ECO:0000303" key="4">
    <source>
    </source>
</evidence>
<evidence type="ECO:0000305" key="5"/>
<evidence type="ECO:0000312" key="6">
    <source>
        <dbReference type="WormBase" id="F42A8.3"/>
    </source>
</evidence>